<gene>
    <name evidence="8" type="primary">LECRK92</name>
    <name evidence="10" type="ordered locus">At5g65600</name>
    <name evidence="11" type="ORF">K21L13.11</name>
</gene>
<name>LRK92_ARATH</name>
<comment type="function">
    <text evidence="6">Promotes hydrogen peroxide H(2)O(2) production and cell death.</text>
</comment>
<comment type="function">
    <text evidence="5 6 7">Involved in resistance response to the pathogenic oomycetes Phytophthora infestans and Phytophthora capsici.</text>
</comment>
<comment type="catalytic activity">
    <reaction evidence="3">
        <text>L-seryl-[protein] + ATP = O-phospho-L-seryl-[protein] + ADP + H(+)</text>
        <dbReference type="Rhea" id="RHEA:17989"/>
        <dbReference type="Rhea" id="RHEA-COMP:9863"/>
        <dbReference type="Rhea" id="RHEA-COMP:11604"/>
        <dbReference type="ChEBI" id="CHEBI:15378"/>
        <dbReference type="ChEBI" id="CHEBI:29999"/>
        <dbReference type="ChEBI" id="CHEBI:30616"/>
        <dbReference type="ChEBI" id="CHEBI:83421"/>
        <dbReference type="ChEBI" id="CHEBI:456216"/>
        <dbReference type="EC" id="2.7.11.1"/>
    </reaction>
</comment>
<comment type="catalytic activity">
    <reaction evidence="3">
        <text>L-threonyl-[protein] + ATP = O-phospho-L-threonyl-[protein] + ADP + H(+)</text>
        <dbReference type="Rhea" id="RHEA:46608"/>
        <dbReference type="Rhea" id="RHEA-COMP:11060"/>
        <dbReference type="Rhea" id="RHEA-COMP:11605"/>
        <dbReference type="ChEBI" id="CHEBI:15378"/>
        <dbReference type="ChEBI" id="CHEBI:30013"/>
        <dbReference type="ChEBI" id="CHEBI:30616"/>
        <dbReference type="ChEBI" id="CHEBI:61977"/>
        <dbReference type="ChEBI" id="CHEBI:456216"/>
        <dbReference type="EC" id="2.7.11.1"/>
    </reaction>
</comment>
<comment type="subunit">
    <text evidence="6">Interacts with ABCG40.</text>
</comment>
<comment type="subcellular location">
    <subcellularLocation>
        <location evidence="1">Cell membrane</location>
        <topology evidence="2">Single-pass type I membrane protein</topology>
    </subcellularLocation>
</comment>
<comment type="disruption phenotype">
    <text evidence="5 6">Increased susceptibility to the oomycetes Phytophthora brassicae and Phytophthora capsici associated with reduced expression of some defense genes (e.g. PR1, PDF1.2, CYP71B15 and CYP81F2). However, normal defense responses to the fungal pathogen Alternaria brassicicola and to the bacterial pathogen Pseudomonas syringae (PubMed:25083911, PubMed:26011556). Susceptibility to P.brassicae and P.capsici is enhanced in plants impaired in LECRK91 and LECRK92 (PubMed:26011556).</text>
</comment>
<comment type="biotechnology">
    <text evidence="7">Confers enhanced resistance to late blight mediated by the pathogenic oomycetes Phytophthora infestans and Phytophthora capsici when transfected into Nicotiana benthamiana. This resistance is associated with a high induction of protease inhibitor genes.</text>
</comment>
<comment type="miscellaneous">
    <text evidence="6">Both lectin domain and kinase activity are required for resistance to oomycetes, but only the lectin domain is required to trigger cell death.</text>
</comment>
<comment type="similarity">
    <text evidence="9">In the C-terminal section; belongs to the protein kinase superfamily. Ser/Thr protein kinase family.</text>
</comment>
<comment type="similarity">
    <text evidence="9">In the N-terminal section; belongs to the leguminous lectin family.</text>
</comment>
<comment type="sequence caution" evidence="9">
    <conflict type="erroneous initiation">
        <sequence resource="EMBL-CDS" id="BAD94319"/>
    </conflict>
    <text>Truncated N-terminus.</text>
</comment>
<comment type="sequence caution" evidence="9">
    <conflict type="frameshift">
        <sequence resource="EMBL-CDS" id="BAD94319"/>
    </conflict>
</comment>
<dbReference type="EC" id="2.7.11.1" evidence="3"/>
<dbReference type="EMBL" id="AB026639">
    <property type="protein sequence ID" value="BAA98179.1"/>
    <property type="molecule type" value="Genomic_DNA"/>
</dbReference>
<dbReference type="EMBL" id="CP002688">
    <property type="protein sequence ID" value="AED98075.1"/>
    <property type="molecule type" value="Genomic_DNA"/>
</dbReference>
<dbReference type="EMBL" id="AK221390">
    <property type="protein sequence ID" value="BAD94319.1"/>
    <property type="status" value="ALT_SEQ"/>
    <property type="molecule type" value="mRNA"/>
</dbReference>
<dbReference type="RefSeq" id="NP_201363.1">
    <property type="nucleotide sequence ID" value="NM_125958.2"/>
</dbReference>
<dbReference type="SMR" id="Q9LSL5"/>
<dbReference type="FunCoup" id="Q9LSL5">
    <property type="interactions" value="107"/>
</dbReference>
<dbReference type="STRING" id="3702.Q9LSL5"/>
<dbReference type="GlyCosmos" id="Q9LSL5">
    <property type="glycosylation" value="8 sites, No reported glycans"/>
</dbReference>
<dbReference type="GlyGen" id="Q9LSL5">
    <property type="glycosylation" value="8 sites"/>
</dbReference>
<dbReference type="PaxDb" id="3702-AT5G65600.1"/>
<dbReference type="ProteomicsDB" id="238677"/>
<dbReference type="EnsemblPlants" id="AT5G65600.1">
    <property type="protein sequence ID" value="AT5G65600.1"/>
    <property type="gene ID" value="AT5G65600"/>
</dbReference>
<dbReference type="GeneID" id="836686"/>
<dbReference type="Gramene" id="AT5G65600.1">
    <property type="protein sequence ID" value="AT5G65600.1"/>
    <property type="gene ID" value="AT5G65600"/>
</dbReference>
<dbReference type="KEGG" id="ath:AT5G65600"/>
<dbReference type="Araport" id="AT5G65600"/>
<dbReference type="TAIR" id="AT5G65600">
    <property type="gene designation" value="LECRK-IX.2"/>
</dbReference>
<dbReference type="eggNOG" id="ENOG502QQSK">
    <property type="taxonomic scope" value="Eukaryota"/>
</dbReference>
<dbReference type="HOGENOM" id="CLU_000288_62_6_1"/>
<dbReference type="InParanoid" id="Q9LSL5"/>
<dbReference type="OMA" id="GWCNEEN"/>
<dbReference type="PhylomeDB" id="Q9LSL5"/>
<dbReference type="PRO" id="PR:Q9LSL5"/>
<dbReference type="Proteomes" id="UP000006548">
    <property type="component" value="Chromosome 5"/>
</dbReference>
<dbReference type="ExpressionAtlas" id="Q9LSL5">
    <property type="expression patterns" value="baseline and differential"/>
</dbReference>
<dbReference type="GO" id="GO:0005886">
    <property type="term" value="C:plasma membrane"/>
    <property type="evidence" value="ECO:0000250"/>
    <property type="project" value="UniProtKB"/>
</dbReference>
<dbReference type="GO" id="GO:0005524">
    <property type="term" value="F:ATP binding"/>
    <property type="evidence" value="ECO:0007669"/>
    <property type="project" value="UniProtKB-KW"/>
</dbReference>
<dbReference type="GO" id="GO:0030246">
    <property type="term" value="F:carbohydrate binding"/>
    <property type="evidence" value="ECO:0007669"/>
    <property type="project" value="UniProtKB-KW"/>
</dbReference>
<dbReference type="GO" id="GO:0016301">
    <property type="term" value="F:kinase activity"/>
    <property type="evidence" value="ECO:0000314"/>
    <property type="project" value="TAIR"/>
</dbReference>
<dbReference type="GO" id="GO:0106310">
    <property type="term" value="F:protein serine kinase activity"/>
    <property type="evidence" value="ECO:0007669"/>
    <property type="project" value="RHEA"/>
</dbReference>
<dbReference type="GO" id="GO:0004674">
    <property type="term" value="F:protein serine/threonine kinase activity"/>
    <property type="evidence" value="ECO:0000314"/>
    <property type="project" value="TAIR"/>
</dbReference>
<dbReference type="GO" id="GO:0002229">
    <property type="term" value="P:defense response to oomycetes"/>
    <property type="evidence" value="ECO:0000314"/>
    <property type="project" value="UniProtKB"/>
</dbReference>
<dbReference type="GO" id="GO:0140426">
    <property type="term" value="P:pathogen-associated molecular pattern receptor signaling pathway"/>
    <property type="evidence" value="ECO:0000353"/>
    <property type="project" value="TAIR"/>
</dbReference>
<dbReference type="GO" id="GO:0009626">
    <property type="term" value="P:plant-type hypersensitive response"/>
    <property type="evidence" value="ECO:0000315"/>
    <property type="project" value="UniProtKB"/>
</dbReference>
<dbReference type="GO" id="GO:1900426">
    <property type="term" value="P:positive regulation of defense response to bacterium"/>
    <property type="evidence" value="ECO:0000315"/>
    <property type="project" value="TAIR"/>
</dbReference>
<dbReference type="GO" id="GO:0006468">
    <property type="term" value="P:protein phosphorylation"/>
    <property type="evidence" value="ECO:0000314"/>
    <property type="project" value="TAIR"/>
</dbReference>
<dbReference type="GO" id="GO:0009862">
    <property type="term" value="P:systemic acquired resistance, salicylic acid mediated signaling pathway"/>
    <property type="evidence" value="ECO:0000315"/>
    <property type="project" value="TAIR"/>
</dbReference>
<dbReference type="CDD" id="cd06899">
    <property type="entry name" value="lectin_legume_LecRK_Arcelin_ConA"/>
    <property type="match status" value="1"/>
</dbReference>
<dbReference type="CDD" id="cd14066">
    <property type="entry name" value="STKc_IRAK"/>
    <property type="match status" value="1"/>
</dbReference>
<dbReference type="FunFam" id="2.60.120.200:FF:000103">
    <property type="entry name" value="L-type lectin-domain containing receptor kinase IX.1"/>
    <property type="match status" value="1"/>
</dbReference>
<dbReference type="FunFam" id="3.30.200.20:FF:000168">
    <property type="entry name" value="L-type lectin-domain containing receptor kinase IX.1"/>
    <property type="match status" value="1"/>
</dbReference>
<dbReference type="FunFam" id="1.10.510.10:FF:000240">
    <property type="entry name" value="Lectin-domain containing receptor kinase A4.3"/>
    <property type="match status" value="1"/>
</dbReference>
<dbReference type="Gene3D" id="2.60.120.200">
    <property type="match status" value="1"/>
</dbReference>
<dbReference type="Gene3D" id="3.30.200.20">
    <property type="entry name" value="Phosphorylase Kinase, domain 1"/>
    <property type="match status" value="1"/>
</dbReference>
<dbReference type="Gene3D" id="1.10.510.10">
    <property type="entry name" value="Transferase(Phosphotransferase) domain 1"/>
    <property type="match status" value="1"/>
</dbReference>
<dbReference type="InterPro" id="IPR013320">
    <property type="entry name" value="ConA-like_dom_sf"/>
</dbReference>
<dbReference type="InterPro" id="IPR011009">
    <property type="entry name" value="Kinase-like_dom_sf"/>
</dbReference>
<dbReference type="InterPro" id="IPR050528">
    <property type="entry name" value="L-type_Lectin-RKs"/>
</dbReference>
<dbReference type="InterPro" id="IPR001220">
    <property type="entry name" value="Legume_lectin_dom"/>
</dbReference>
<dbReference type="InterPro" id="IPR000719">
    <property type="entry name" value="Prot_kinase_dom"/>
</dbReference>
<dbReference type="InterPro" id="IPR017441">
    <property type="entry name" value="Protein_kinase_ATP_BS"/>
</dbReference>
<dbReference type="InterPro" id="IPR008271">
    <property type="entry name" value="Ser/Thr_kinase_AS"/>
</dbReference>
<dbReference type="PANTHER" id="PTHR27007">
    <property type="match status" value="1"/>
</dbReference>
<dbReference type="Pfam" id="PF00139">
    <property type="entry name" value="Lectin_legB"/>
    <property type="match status" value="1"/>
</dbReference>
<dbReference type="Pfam" id="PF00069">
    <property type="entry name" value="Pkinase"/>
    <property type="match status" value="1"/>
</dbReference>
<dbReference type="SMART" id="SM00220">
    <property type="entry name" value="S_TKc"/>
    <property type="match status" value="1"/>
</dbReference>
<dbReference type="SUPFAM" id="SSF49899">
    <property type="entry name" value="Concanavalin A-like lectins/glucanases"/>
    <property type="match status" value="1"/>
</dbReference>
<dbReference type="SUPFAM" id="SSF56112">
    <property type="entry name" value="Protein kinase-like (PK-like)"/>
    <property type="match status" value="1"/>
</dbReference>
<dbReference type="PROSITE" id="PS00107">
    <property type="entry name" value="PROTEIN_KINASE_ATP"/>
    <property type="match status" value="1"/>
</dbReference>
<dbReference type="PROSITE" id="PS50011">
    <property type="entry name" value="PROTEIN_KINASE_DOM"/>
    <property type="match status" value="1"/>
</dbReference>
<dbReference type="PROSITE" id="PS00108">
    <property type="entry name" value="PROTEIN_KINASE_ST"/>
    <property type="match status" value="1"/>
</dbReference>
<proteinExistence type="evidence at protein level"/>
<sequence length="675" mass="75295">MLYFIFCQNLSSSSSMSNSILFLSLFLFLPFVVDSLYFNFTSFRQGDPGDIFYHGDATPDEDGTVNFNNAEQTSQVGWITYSKKVPIWSHKTGKASDFSTSFSFKIDARNLSADGHGICFFLAPMGAQLPAYSVGGFLNLFTRKNNYSSSFPLVHVEFDTFNNPGWDPNDVGSHVGINNNSLVSSNYTSWNASSHSQDICHAKISYDSVTKNLSVTWAYELTATSDPKESSSLSYIIDLAKVLPSDVMFGFIAAAGTNTEEHRLLSWELSSSLDSDKADSRIGLVIGISASGFVFLTFMVITTVVVWSRKQRKKKERDIENMISINKDLEREAGPRKFSYKDLVSATNRFSSHRKLGEGGFGAVYEGNLKEINTMVAVKKLSGDSRQGKNEFLNEVKIISKLRHRNLVQLIGWCNEKNEFLLIYELVPNGSLNSHLFGKRPNLLSWDIRYKIGLGLASALLYLHEEWDQCVLHRDIKASNIMLDSEFNVKLGDFGLARLMNHELGSHTTGLAGTFGYMAPEYVMKGSASKESDIYSFGIVLLEIVTGRKSLERTQEDNSDTESDDEKSLVEKVWELYGKQELITSCVDDKLGEDFDKKEAECLLVLGLWCAHPDKNSRPSIKQGIQVMNFESPLPDLPLKRPVAMYYISTTTSSSSPSVNSNGVSVTFSGIEYGR</sequence>
<organism>
    <name type="scientific">Arabidopsis thaliana</name>
    <name type="common">Mouse-ear cress</name>
    <dbReference type="NCBI Taxonomy" id="3702"/>
    <lineage>
        <taxon>Eukaryota</taxon>
        <taxon>Viridiplantae</taxon>
        <taxon>Streptophyta</taxon>
        <taxon>Embryophyta</taxon>
        <taxon>Tracheophyta</taxon>
        <taxon>Spermatophyta</taxon>
        <taxon>Magnoliopsida</taxon>
        <taxon>eudicotyledons</taxon>
        <taxon>Gunneridae</taxon>
        <taxon>Pentapetalae</taxon>
        <taxon>rosids</taxon>
        <taxon>malvids</taxon>
        <taxon>Brassicales</taxon>
        <taxon>Brassicaceae</taxon>
        <taxon>Camelineae</taxon>
        <taxon>Arabidopsis</taxon>
    </lineage>
</organism>
<feature type="signal peptide" evidence="2">
    <location>
        <begin position="1"/>
        <end position="35"/>
    </location>
</feature>
<feature type="chain" id="PRO_0000403104" description="L-type lectin-domain containing receptor kinase IX.2">
    <location>
        <begin position="36"/>
        <end position="675"/>
    </location>
</feature>
<feature type="topological domain" description="Extracellular" evidence="9">
    <location>
        <begin position="36"/>
        <end position="281"/>
    </location>
</feature>
<feature type="transmembrane region" description="Helical" evidence="2">
    <location>
        <begin position="282"/>
        <end position="302"/>
    </location>
</feature>
<feature type="topological domain" description="Cytoplasmic" evidence="9">
    <location>
        <begin position="303"/>
        <end position="675"/>
    </location>
</feature>
<feature type="domain" description="Protein kinase" evidence="3">
    <location>
        <begin position="350"/>
        <end position="631"/>
    </location>
</feature>
<feature type="region of interest" description="Legume-lectin like" evidence="2">
    <location>
        <begin position="36"/>
        <end position="269"/>
    </location>
</feature>
<feature type="active site" description="Proton acceptor" evidence="3">
    <location>
        <position position="475"/>
    </location>
</feature>
<feature type="binding site" evidence="3">
    <location>
        <begin position="356"/>
        <end position="364"/>
    </location>
    <ligand>
        <name>ATP</name>
        <dbReference type="ChEBI" id="CHEBI:30616"/>
    </ligand>
</feature>
<feature type="binding site" evidence="3">
    <location>
        <position position="379"/>
    </location>
    <ligand>
        <name>ATP</name>
        <dbReference type="ChEBI" id="CHEBI:30616"/>
    </ligand>
</feature>
<feature type="glycosylation site" description="N-linked (GlcNAc...) asparagine" evidence="4">
    <location>
        <position position="9"/>
    </location>
</feature>
<feature type="glycosylation site" description="N-linked (GlcNAc...) asparagine" evidence="4">
    <location>
        <position position="39"/>
    </location>
</feature>
<feature type="glycosylation site" description="N-linked (GlcNAc...) asparagine" evidence="4">
    <location>
        <position position="110"/>
    </location>
</feature>
<feature type="glycosylation site" description="N-linked (GlcNAc...) asparagine" evidence="4">
    <location>
        <position position="146"/>
    </location>
</feature>
<feature type="glycosylation site" description="N-linked (GlcNAc...) asparagine" evidence="4">
    <location>
        <position position="179"/>
    </location>
</feature>
<feature type="glycosylation site" description="N-linked (GlcNAc...) asparagine" evidence="4">
    <location>
        <position position="186"/>
    </location>
</feature>
<feature type="glycosylation site" description="N-linked (GlcNAc...) asparagine" evidence="4">
    <location>
        <position position="191"/>
    </location>
</feature>
<feature type="glycosylation site" description="N-linked (GlcNAc...) asparagine" evidence="4">
    <location>
        <position position="212"/>
    </location>
</feature>
<feature type="mutagenesis site" description="In LecRK-IX.2-AA; loss of kinase activity and impaired ability to mediate resistance to Phytophthora." evidence="6">
    <original>RD</original>
    <variation>AA</variation>
    <location>
        <begin position="474"/>
        <end position="475"/>
    </location>
</feature>
<feature type="mutagenesis site" description="In LecRK-IX.2-RN; loss of kinase activity and impaired ability to mediate resistance to Phytophthora." evidence="6">
    <original>D</original>
    <variation>N</variation>
    <location>
        <position position="475"/>
    </location>
</feature>
<evidence type="ECO:0000250" key="1">
    <source>
        <dbReference type="UniProtKB" id="Q9LSR8"/>
    </source>
</evidence>
<evidence type="ECO:0000255" key="2"/>
<evidence type="ECO:0000255" key="3">
    <source>
        <dbReference type="PROSITE-ProRule" id="PRU00159"/>
    </source>
</evidence>
<evidence type="ECO:0000255" key="4">
    <source>
        <dbReference type="PROSITE-ProRule" id="PRU00498"/>
    </source>
</evidence>
<evidence type="ECO:0000269" key="5">
    <source>
    </source>
</evidence>
<evidence type="ECO:0000269" key="6">
    <source>
    </source>
</evidence>
<evidence type="ECO:0000269" key="7">
    <source>
    </source>
</evidence>
<evidence type="ECO:0000303" key="8">
    <source>
    </source>
</evidence>
<evidence type="ECO:0000305" key="9"/>
<evidence type="ECO:0000312" key="10">
    <source>
        <dbReference type="Araport" id="AT5G65600"/>
    </source>
</evidence>
<evidence type="ECO:0000312" key="11">
    <source>
        <dbReference type="EMBL" id="BAA98179.1"/>
    </source>
</evidence>
<protein>
    <recommendedName>
        <fullName evidence="8">L-type lectin-domain containing receptor kinase IX.2</fullName>
        <shortName evidence="8">LecRK-IX.2</shortName>
        <ecNumber evidence="3">2.7.11.1</ecNumber>
    </recommendedName>
</protein>
<accession>Q9LSL5</accession>
<accession>Q56YD3</accession>
<keyword id="KW-0067">ATP-binding</keyword>
<keyword id="KW-1003">Cell membrane</keyword>
<keyword id="KW-0325">Glycoprotein</keyword>
<keyword id="KW-0418">Kinase</keyword>
<keyword id="KW-0430">Lectin</keyword>
<keyword id="KW-0472">Membrane</keyword>
<keyword id="KW-0547">Nucleotide-binding</keyword>
<keyword id="KW-0611">Plant defense</keyword>
<keyword id="KW-0675">Receptor</keyword>
<keyword id="KW-1185">Reference proteome</keyword>
<keyword id="KW-0723">Serine/threonine-protein kinase</keyword>
<keyword id="KW-0732">Signal</keyword>
<keyword id="KW-0808">Transferase</keyword>
<keyword id="KW-0812">Transmembrane</keyword>
<keyword id="KW-1133">Transmembrane helix</keyword>
<reference key="1">
    <citation type="submission" date="1999-04" db="EMBL/GenBank/DDBJ databases">
        <title>Structural analysis of Arabidopsis thaliana chromosome 5. XI.</title>
        <authorList>
            <person name="Kaneko T."/>
            <person name="Katoh T."/>
            <person name="Asamizu E."/>
            <person name="Sato S."/>
            <person name="Nakamura Y."/>
            <person name="Kotani H."/>
            <person name="Tabata S."/>
        </authorList>
    </citation>
    <scope>NUCLEOTIDE SEQUENCE [LARGE SCALE GENOMIC DNA]</scope>
    <source>
        <strain>cv. Columbia</strain>
    </source>
</reference>
<reference key="2">
    <citation type="journal article" date="2017" name="Plant J.">
        <title>Araport11: a complete reannotation of the Arabidopsis thaliana reference genome.</title>
        <authorList>
            <person name="Cheng C.Y."/>
            <person name="Krishnakumar V."/>
            <person name="Chan A.P."/>
            <person name="Thibaud-Nissen F."/>
            <person name="Schobel S."/>
            <person name="Town C.D."/>
        </authorList>
    </citation>
    <scope>GENOME REANNOTATION</scope>
    <source>
        <strain>cv. Columbia</strain>
    </source>
</reference>
<reference key="3">
    <citation type="submission" date="2005-03" db="EMBL/GenBank/DDBJ databases">
        <title>Large-scale analysis of RIKEN Arabidopsis full-length (RAFL) cDNAs.</title>
        <authorList>
            <person name="Totoki Y."/>
            <person name="Seki M."/>
            <person name="Ishida J."/>
            <person name="Nakajima M."/>
            <person name="Enju A."/>
            <person name="Kamiya A."/>
            <person name="Narusaka M."/>
            <person name="Shin-i T."/>
            <person name="Nakagawa M."/>
            <person name="Sakamoto N."/>
            <person name="Oishi K."/>
            <person name="Kohara Y."/>
            <person name="Kobayashi M."/>
            <person name="Toyoda A."/>
            <person name="Sakaki Y."/>
            <person name="Sakurai T."/>
            <person name="Iida K."/>
            <person name="Akiyama K."/>
            <person name="Satou M."/>
            <person name="Toyoda T."/>
            <person name="Konagaya A."/>
            <person name="Carninci P."/>
            <person name="Kawai J."/>
            <person name="Hayashizaki Y."/>
            <person name="Shinozaki K."/>
        </authorList>
    </citation>
    <scope>NUCLEOTIDE SEQUENCE [LARGE SCALE MRNA] OF 8-457</scope>
    <source>
        <strain>cv. Columbia</strain>
    </source>
</reference>
<reference key="4">
    <citation type="journal article" date="2002" name="Crit. Rev. Plant Sci.">
        <title>Lectin receptor kinases in plants.</title>
        <authorList>
            <person name="Barre A."/>
            <person name="Herve C."/>
            <person name="Lescure B."/>
            <person name="Rouge P."/>
        </authorList>
    </citation>
    <scope>GENE FAMILY</scope>
</reference>
<reference key="5">
    <citation type="journal article" date="2009" name="J. Exp. Bot.">
        <title>Arabidopsis L-type lectin receptor kinases: phylogeny, classification, and expression profiles.</title>
        <authorList>
            <person name="Bouwmeester K."/>
            <person name="Govers F."/>
        </authorList>
    </citation>
    <scope>GENE FAMILY</scope>
    <scope>NOMENCLATURE</scope>
</reference>
<reference key="6">
    <citation type="journal article" date="2014" name="Mol. Plant Microbe Interact.">
        <title>Phenotypic analyses of Arabidopsis T-DNA insertion lines and expression profiling reveal that multiple L-type lectin receptor kinases are involved in plant immunity.</title>
        <authorList>
            <person name="Wang Y."/>
            <person name="Bouwmeester K."/>
            <person name="Beseh P."/>
            <person name="Shan W."/>
            <person name="Govers F."/>
        </authorList>
    </citation>
    <scope>FUNCTION</scope>
    <scope>DISRUPTION PHENOTYPE</scope>
    <source>
        <strain>cv. Columbia</strain>
    </source>
</reference>
<reference key="7">
    <citation type="journal article" date="2015" name="Mol. Plant Microbe Interact.">
        <title>Arabidopsis lectin receptor kinases LecRK-IX.1 and LecRK-IX.2 are functional analogs in regulating phytophthora resistance and plant cell death.</title>
        <authorList>
            <person name="Wang Y."/>
            <person name="Cordewener J.H.G."/>
            <person name="America A.H.P."/>
            <person name="Shan W."/>
            <person name="Bouwmeester K."/>
            <person name="Govers F."/>
        </authorList>
    </citation>
    <scope>FUNCTION</scope>
    <scope>MUTAGENESIS OF 474-ARG-ASP-475 AND ASP-475</scope>
    <scope>DISRUPTION PHENOTYPE</scope>
    <scope>INTERACTION WITH ABCG40</scope>
    <scope>MISCELLANEOUS</scope>
    <source>
        <strain>cv. Columbia</strain>
    </source>
</reference>
<reference key="8">
    <citation type="journal article" date="2016" name="Plant Cell Rep.">
        <title>Ectopic expression of Arabidopsis L-type lectin receptor kinase genes LecRK-I.9 and LecRK-IX.1 in Nicotiana benthamiana confers Phytophthora resistance.</title>
        <authorList>
            <person name="Wang Y."/>
            <person name="Nsibo D.L."/>
            <person name="Juhar H.M."/>
            <person name="Govers F."/>
            <person name="Bouwmeester K."/>
        </authorList>
    </citation>
    <scope>FUNCTION</scope>
    <scope>BIOTECHNOLOGY</scope>
</reference>